<protein>
    <recommendedName>
        <fullName>Flavin-containing monooxygenase 5</fullName>
        <shortName>FMO 5</shortName>
    </recommendedName>
    <alternativeName>
        <fullName evidence="8">Dimethylaniline monooxygenase [N-oxide-forming] 5</fullName>
        <ecNumber evidence="1">1.14.13.8</ecNumber>
    </alternativeName>
    <alternativeName>
        <fullName>Dimethylaniline oxidase 5</fullName>
    </alternativeName>
    <alternativeName>
        <fullName>Hepatic flavin-containing monooxygenase 5</fullName>
    </alternativeName>
    <alternativeName>
        <fullName evidence="1">NADPH oxidase</fullName>
        <ecNumber evidence="1">1.6.3.1</ecNumber>
    </alternativeName>
</protein>
<reference key="1">
    <citation type="journal article" date="1998" name="J. Biochem. Mol. Toxicol.">
        <title>Molecular cloning, sequence, and expression of mouse flavin-containing monooxygenases 1 and 5 (FMO1 and FMO5).</title>
        <authorList>
            <person name="Cherrington N.J."/>
            <person name="Falls J.G."/>
            <person name="Rose R.L."/>
            <person name="Clements K.M."/>
            <person name="Philpot R.M."/>
            <person name="Levi P.E."/>
            <person name="Hodgson E."/>
        </authorList>
    </citation>
    <scope>NUCLEOTIDE SEQUENCE [MRNA]</scope>
    <scope>COFACTOR</scope>
    <source>
        <strain>CD-1</strain>
        <tissue>Liver</tissue>
    </source>
</reference>
<reference key="2">
    <citation type="journal article" date="2005" name="Science">
        <title>The transcriptional landscape of the mammalian genome.</title>
        <authorList>
            <person name="Carninci P."/>
            <person name="Kasukawa T."/>
            <person name="Katayama S."/>
            <person name="Gough J."/>
            <person name="Frith M.C."/>
            <person name="Maeda N."/>
            <person name="Oyama R."/>
            <person name="Ravasi T."/>
            <person name="Lenhard B."/>
            <person name="Wells C."/>
            <person name="Kodzius R."/>
            <person name="Shimokawa K."/>
            <person name="Bajic V.B."/>
            <person name="Brenner S.E."/>
            <person name="Batalov S."/>
            <person name="Forrest A.R."/>
            <person name="Zavolan M."/>
            <person name="Davis M.J."/>
            <person name="Wilming L.G."/>
            <person name="Aidinis V."/>
            <person name="Allen J.E."/>
            <person name="Ambesi-Impiombato A."/>
            <person name="Apweiler R."/>
            <person name="Aturaliya R.N."/>
            <person name="Bailey T.L."/>
            <person name="Bansal M."/>
            <person name="Baxter L."/>
            <person name="Beisel K.W."/>
            <person name="Bersano T."/>
            <person name="Bono H."/>
            <person name="Chalk A.M."/>
            <person name="Chiu K.P."/>
            <person name="Choudhary V."/>
            <person name="Christoffels A."/>
            <person name="Clutterbuck D.R."/>
            <person name="Crowe M.L."/>
            <person name="Dalla E."/>
            <person name="Dalrymple B.P."/>
            <person name="de Bono B."/>
            <person name="Della Gatta G."/>
            <person name="di Bernardo D."/>
            <person name="Down T."/>
            <person name="Engstrom P."/>
            <person name="Fagiolini M."/>
            <person name="Faulkner G."/>
            <person name="Fletcher C.F."/>
            <person name="Fukushima T."/>
            <person name="Furuno M."/>
            <person name="Futaki S."/>
            <person name="Gariboldi M."/>
            <person name="Georgii-Hemming P."/>
            <person name="Gingeras T.R."/>
            <person name="Gojobori T."/>
            <person name="Green R.E."/>
            <person name="Gustincich S."/>
            <person name="Harbers M."/>
            <person name="Hayashi Y."/>
            <person name="Hensch T.K."/>
            <person name="Hirokawa N."/>
            <person name="Hill D."/>
            <person name="Huminiecki L."/>
            <person name="Iacono M."/>
            <person name="Ikeo K."/>
            <person name="Iwama A."/>
            <person name="Ishikawa T."/>
            <person name="Jakt M."/>
            <person name="Kanapin A."/>
            <person name="Katoh M."/>
            <person name="Kawasawa Y."/>
            <person name="Kelso J."/>
            <person name="Kitamura H."/>
            <person name="Kitano H."/>
            <person name="Kollias G."/>
            <person name="Krishnan S.P."/>
            <person name="Kruger A."/>
            <person name="Kummerfeld S.K."/>
            <person name="Kurochkin I.V."/>
            <person name="Lareau L.F."/>
            <person name="Lazarevic D."/>
            <person name="Lipovich L."/>
            <person name="Liu J."/>
            <person name="Liuni S."/>
            <person name="McWilliam S."/>
            <person name="Madan Babu M."/>
            <person name="Madera M."/>
            <person name="Marchionni L."/>
            <person name="Matsuda H."/>
            <person name="Matsuzawa S."/>
            <person name="Miki H."/>
            <person name="Mignone F."/>
            <person name="Miyake S."/>
            <person name="Morris K."/>
            <person name="Mottagui-Tabar S."/>
            <person name="Mulder N."/>
            <person name="Nakano N."/>
            <person name="Nakauchi H."/>
            <person name="Ng P."/>
            <person name="Nilsson R."/>
            <person name="Nishiguchi S."/>
            <person name="Nishikawa S."/>
            <person name="Nori F."/>
            <person name="Ohara O."/>
            <person name="Okazaki Y."/>
            <person name="Orlando V."/>
            <person name="Pang K.C."/>
            <person name="Pavan W.J."/>
            <person name="Pavesi G."/>
            <person name="Pesole G."/>
            <person name="Petrovsky N."/>
            <person name="Piazza S."/>
            <person name="Reed J."/>
            <person name="Reid J.F."/>
            <person name="Ring B.Z."/>
            <person name="Ringwald M."/>
            <person name="Rost B."/>
            <person name="Ruan Y."/>
            <person name="Salzberg S.L."/>
            <person name="Sandelin A."/>
            <person name="Schneider C."/>
            <person name="Schoenbach C."/>
            <person name="Sekiguchi K."/>
            <person name="Semple C.A."/>
            <person name="Seno S."/>
            <person name="Sessa L."/>
            <person name="Sheng Y."/>
            <person name="Shibata Y."/>
            <person name="Shimada H."/>
            <person name="Shimada K."/>
            <person name="Silva D."/>
            <person name="Sinclair B."/>
            <person name="Sperling S."/>
            <person name="Stupka E."/>
            <person name="Sugiura K."/>
            <person name="Sultana R."/>
            <person name="Takenaka Y."/>
            <person name="Taki K."/>
            <person name="Tammoja K."/>
            <person name="Tan S.L."/>
            <person name="Tang S."/>
            <person name="Taylor M.S."/>
            <person name="Tegner J."/>
            <person name="Teichmann S.A."/>
            <person name="Ueda H.R."/>
            <person name="van Nimwegen E."/>
            <person name="Verardo R."/>
            <person name="Wei C.L."/>
            <person name="Yagi K."/>
            <person name="Yamanishi H."/>
            <person name="Zabarovsky E."/>
            <person name="Zhu S."/>
            <person name="Zimmer A."/>
            <person name="Hide W."/>
            <person name="Bult C."/>
            <person name="Grimmond S.M."/>
            <person name="Teasdale R.D."/>
            <person name="Liu E.T."/>
            <person name="Brusic V."/>
            <person name="Quackenbush J."/>
            <person name="Wahlestedt C."/>
            <person name="Mattick J.S."/>
            <person name="Hume D.A."/>
            <person name="Kai C."/>
            <person name="Sasaki D."/>
            <person name="Tomaru Y."/>
            <person name="Fukuda S."/>
            <person name="Kanamori-Katayama M."/>
            <person name="Suzuki M."/>
            <person name="Aoki J."/>
            <person name="Arakawa T."/>
            <person name="Iida J."/>
            <person name="Imamura K."/>
            <person name="Itoh M."/>
            <person name="Kato T."/>
            <person name="Kawaji H."/>
            <person name="Kawagashira N."/>
            <person name="Kawashima T."/>
            <person name="Kojima M."/>
            <person name="Kondo S."/>
            <person name="Konno H."/>
            <person name="Nakano K."/>
            <person name="Ninomiya N."/>
            <person name="Nishio T."/>
            <person name="Okada M."/>
            <person name="Plessy C."/>
            <person name="Shibata K."/>
            <person name="Shiraki T."/>
            <person name="Suzuki S."/>
            <person name="Tagami M."/>
            <person name="Waki K."/>
            <person name="Watahiki A."/>
            <person name="Okamura-Oho Y."/>
            <person name="Suzuki H."/>
            <person name="Kawai J."/>
            <person name="Hayashizaki Y."/>
        </authorList>
    </citation>
    <scope>NUCLEOTIDE SEQUENCE [LARGE SCALE MRNA]</scope>
    <source>
        <strain>C57BL/6J</strain>
        <tissue>Pituitary</tissue>
    </source>
</reference>
<reference key="3">
    <citation type="submission" date="2005-07" db="EMBL/GenBank/DDBJ databases">
        <authorList>
            <person name="Mural R.J."/>
            <person name="Adams M.D."/>
            <person name="Myers E.W."/>
            <person name="Smith H.O."/>
            <person name="Venter J.C."/>
        </authorList>
    </citation>
    <scope>NUCLEOTIDE SEQUENCE [LARGE SCALE GENOMIC DNA]</scope>
</reference>
<reference key="4">
    <citation type="journal article" date="2004" name="Genome Res.">
        <title>The status, quality, and expansion of the NIH full-length cDNA project: the Mammalian Gene Collection (MGC).</title>
        <authorList>
            <consortium name="The MGC Project Team"/>
        </authorList>
    </citation>
    <scope>NUCLEOTIDE SEQUENCE [LARGE SCALE MRNA]</scope>
    <source>
        <strain>FVB/N</strain>
        <tissue>Liver</tissue>
    </source>
</reference>
<reference key="5">
    <citation type="journal article" date="2010" name="Cell">
        <title>A tissue-specific atlas of mouse protein phosphorylation and expression.</title>
        <authorList>
            <person name="Huttlin E.L."/>
            <person name="Jedrychowski M.P."/>
            <person name="Elias J.E."/>
            <person name="Goswami T."/>
            <person name="Rad R."/>
            <person name="Beausoleil S.A."/>
            <person name="Villen J."/>
            <person name="Haas W."/>
            <person name="Sowa M.E."/>
            <person name="Gygi S.P."/>
        </authorList>
    </citation>
    <scope>PHOSPHORYLATION [LARGE SCALE ANALYSIS] AT SER-401</scope>
    <scope>IDENTIFICATION BY MASS SPECTROMETRY [LARGE SCALE ANALYSIS]</scope>
    <source>
        <tissue>Kidney</tissue>
        <tissue>Liver</tissue>
        <tissue>Lung</tissue>
    </source>
</reference>
<reference key="6">
    <citation type="journal article" date="2015" name="Biochem. Pharmacol.">
        <title>The phenotype of a knockout mouse identifies flavin-containing monooxygenase 5 (FMO5) as a regulator of metabolic ageing.</title>
        <authorList>
            <person name="Gonzalez Malagon S.G."/>
            <person name="Melidoni A.N."/>
            <person name="Hernandez D."/>
            <person name="Omar B.A."/>
            <person name="Houseman L."/>
            <person name="Veeravalli S."/>
            <person name="Scott F."/>
            <person name="Varshavi D."/>
            <person name="Everett J."/>
            <person name="Tsuchiya Y."/>
            <person name="Timms J.F."/>
            <person name="Phillips I.R."/>
            <person name="Shephard E.A."/>
        </authorList>
    </citation>
    <scope>FUNCTION</scope>
    <scope>DISRUPTION PHENOTYPE</scope>
    <scope>TISSUE SPECIFICITY</scope>
</reference>
<reference key="7">
    <citation type="journal article" date="2017" name="Drug Metab. Dispos.">
        <title>Identification of Flavin-Containing Monooxygenase 5 (FMO5) as a Regulator of Glucose Homeostasis and a Potential Sensor of Gut Bacteria.</title>
        <authorList>
            <person name="Scott F."/>
            <person name="Gonzalez Malagon S.G."/>
            <person name="O'Brien B.A."/>
            <person name="Fennema D."/>
            <person name="Veeravalli S."/>
            <person name="Coveney C.R."/>
            <person name="Phillips I.R."/>
            <person name="Shephard E.A."/>
        </authorList>
    </citation>
    <scope>DISRUPTION PHENOTYPE</scope>
    <scope>TISSUE SPECIFICITY</scope>
    <scope>INDUCTION BY HFD</scope>
</reference>
<reference key="8">
    <citation type="journal article" date="2018" name="Front. Mol. Biosci.">
        <title>Metabolic Biomarkers of Ageing in C57BL/6J Wild-Type and Flavin-Containing Monooxygenase 5 (FMO5)-Knockout Mice.</title>
        <authorList>
            <person name="Varshavi D."/>
            <person name="Scott F.H."/>
            <person name="Varshavi D."/>
            <person name="Veeravalli S."/>
            <person name="Phillips I.R."/>
            <person name="Veselkov K."/>
            <person name="Strittmatter N."/>
            <person name="Takats Z."/>
            <person name="Shephard E.A."/>
            <person name="Everett J.R."/>
        </authorList>
    </citation>
    <scope>DISRUPTION PHENOTYPE</scope>
</reference>
<dbReference type="EC" id="1.14.13.8" evidence="1"/>
<dbReference type="EC" id="1.6.3.1" evidence="1"/>
<dbReference type="EMBL" id="U90535">
    <property type="protein sequence ID" value="AAB50013.1"/>
    <property type="molecule type" value="mRNA"/>
</dbReference>
<dbReference type="EMBL" id="AK133675">
    <property type="protein sequence ID" value="BAE21778.1"/>
    <property type="molecule type" value="mRNA"/>
</dbReference>
<dbReference type="EMBL" id="CH466620">
    <property type="protein sequence ID" value="EDL38939.1"/>
    <property type="molecule type" value="Genomic_DNA"/>
</dbReference>
<dbReference type="EMBL" id="BC022991">
    <property type="protein sequence ID" value="AAH22991.1"/>
    <property type="molecule type" value="mRNA"/>
</dbReference>
<dbReference type="CCDS" id="CCDS17656.1"/>
<dbReference type="RefSeq" id="NP_001155235.1">
    <property type="nucleotide sequence ID" value="NM_001161763.1"/>
</dbReference>
<dbReference type="RefSeq" id="NP_001155237.1">
    <property type="nucleotide sequence ID" value="NM_001161765.1"/>
</dbReference>
<dbReference type="RefSeq" id="NP_034362.2">
    <property type="nucleotide sequence ID" value="NM_010232.4"/>
</dbReference>
<dbReference type="RefSeq" id="XP_006501058.1">
    <property type="nucleotide sequence ID" value="XM_006500995.5"/>
</dbReference>
<dbReference type="SMR" id="P97872"/>
<dbReference type="BioGRID" id="199714">
    <property type="interactions" value="3"/>
</dbReference>
<dbReference type="FunCoup" id="P97872">
    <property type="interactions" value="1425"/>
</dbReference>
<dbReference type="IntAct" id="P97872">
    <property type="interactions" value="6"/>
</dbReference>
<dbReference type="STRING" id="10090.ENSMUSP00000102665"/>
<dbReference type="GlyGen" id="P97872">
    <property type="glycosylation" value="1 site, 1 O-linked glycan (1 site)"/>
</dbReference>
<dbReference type="iPTMnet" id="P97872"/>
<dbReference type="PhosphoSitePlus" id="P97872"/>
<dbReference type="SwissPalm" id="P97872"/>
<dbReference type="jPOST" id="P97872"/>
<dbReference type="PaxDb" id="10090-ENSMUSP00000102665"/>
<dbReference type="PeptideAtlas" id="P97872"/>
<dbReference type="ProteomicsDB" id="271702"/>
<dbReference type="Antibodypedia" id="2436">
    <property type="antibodies" value="208 antibodies from 25 providers"/>
</dbReference>
<dbReference type="DNASU" id="14263"/>
<dbReference type="Ensembl" id="ENSMUST00000029729.15">
    <property type="protein sequence ID" value="ENSMUSP00000029729.9"/>
    <property type="gene ID" value="ENSMUSG00000028088.15"/>
</dbReference>
<dbReference type="Ensembl" id="ENSMUST00000107049.2">
    <property type="protein sequence ID" value="ENSMUSP00000102664.2"/>
    <property type="gene ID" value="ENSMUSG00000028088.15"/>
</dbReference>
<dbReference type="Ensembl" id="ENSMUST00000107050.8">
    <property type="protein sequence ID" value="ENSMUSP00000102665.2"/>
    <property type="gene ID" value="ENSMUSG00000028088.15"/>
</dbReference>
<dbReference type="GeneID" id="14263"/>
<dbReference type="KEGG" id="mmu:14263"/>
<dbReference type="UCSC" id="uc008qoy.2">
    <property type="organism name" value="mouse"/>
</dbReference>
<dbReference type="AGR" id="MGI:1310004"/>
<dbReference type="CTD" id="2330"/>
<dbReference type="MGI" id="MGI:1310004">
    <property type="gene designation" value="Fmo5"/>
</dbReference>
<dbReference type="VEuPathDB" id="HostDB:ENSMUSG00000028088"/>
<dbReference type="eggNOG" id="KOG1399">
    <property type="taxonomic scope" value="Eukaryota"/>
</dbReference>
<dbReference type="GeneTree" id="ENSGT00940000160493"/>
<dbReference type="HOGENOM" id="CLU_006909_8_2_1"/>
<dbReference type="InParanoid" id="P97872"/>
<dbReference type="OMA" id="CCTGYDI"/>
<dbReference type="OrthoDB" id="66881at2759"/>
<dbReference type="PhylomeDB" id="P97872"/>
<dbReference type="TreeFam" id="TF105285"/>
<dbReference type="BRENDA" id="1.14.13.8">
    <property type="organism ID" value="3474"/>
</dbReference>
<dbReference type="BioGRID-ORCS" id="14263">
    <property type="hits" value="4 hits in 76 CRISPR screens"/>
</dbReference>
<dbReference type="ChiTaRS" id="Fmo5">
    <property type="organism name" value="mouse"/>
</dbReference>
<dbReference type="PRO" id="PR:P97872"/>
<dbReference type="Proteomes" id="UP000000589">
    <property type="component" value="Chromosome 3"/>
</dbReference>
<dbReference type="RNAct" id="P97872">
    <property type="molecule type" value="protein"/>
</dbReference>
<dbReference type="Bgee" id="ENSMUSG00000028088">
    <property type="expression patterns" value="Expressed in urinary bladder urothelium and 143 other cell types or tissues"/>
</dbReference>
<dbReference type="GO" id="GO:0005829">
    <property type="term" value="C:cytosol"/>
    <property type="evidence" value="ECO:0007669"/>
    <property type="project" value="Ensembl"/>
</dbReference>
<dbReference type="GO" id="GO:0005789">
    <property type="term" value="C:endoplasmic reticulum membrane"/>
    <property type="evidence" value="ECO:0007669"/>
    <property type="project" value="UniProtKB-SubCell"/>
</dbReference>
<dbReference type="GO" id="GO:0004031">
    <property type="term" value="F:aldehyde oxidase activity"/>
    <property type="evidence" value="ECO:0007669"/>
    <property type="project" value="Ensembl"/>
</dbReference>
<dbReference type="GO" id="GO:0050660">
    <property type="term" value="F:flavin adenine dinucleotide binding"/>
    <property type="evidence" value="ECO:0007669"/>
    <property type="project" value="InterPro"/>
</dbReference>
<dbReference type="GO" id="GO:0004497">
    <property type="term" value="F:monooxygenase activity"/>
    <property type="evidence" value="ECO:0000250"/>
    <property type="project" value="UniProtKB"/>
</dbReference>
<dbReference type="GO" id="GO:0004499">
    <property type="term" value="F:N,N-dimethylaniline monooxygenase activity"/>
    <property type="evidence" value="ECO:0007669"/>
    <property type="project" value="InterPro"/>
</dbReference>
<dbReference type="GO" id="GO:0050661">
    <property type="term" value="F:NADP binding"/>
    <property type="evidence" value="ECO:0007669"/>
    <property type="project" value="InterPro"/>
</dbReference>
<dbReference type="GO" id="GO:0106294">
    <property type="term" value="F:NADPH oxidase H202-forming activity"/>
    <property type="evidence" value="ECO:0007669"/>
    <property type="project" value="RHEA"/>
</dbReference>
<dbReference type="GO" id="GO:0006629">
    <property type="term" value="P:lipid metabolic process"/>
    <property type="evidence" value="ECO:0007669"/>
    <property type="project" value="UniProtKB-KW"/>
</dbReference>
<dbReference type="GO" id="GO:0090181">
    <property type="term" value="P:regulation of cholesterol metabolic process"/>
    <property type="evidence" value="ECO:0000315"/>
    <property type="project" value="UniProtKB"/>
</dbReference>
<dbReference type="GO" id="GO:0006805">
    <property type="term" value="P:xenobiotic metabolic process"/>
    <property type="evidence" value="ECO:0000250"/>
    <property type="project" value="UniProtKB"/>
</dbReference>
<dbReference type="FunFam" id="3.50.50.60:FF:000042">
    <property type="entry name" value="Dimethylaniline monooxygenase [N-oxide-forming]"/>
    <property type="match status" value="1"/>
</dbReference>
<dbReference type="FunFam" id="3.50.50.60:FF:000073">
    <property type="entry name" value="Dimethylaniline monooxygenase [N-oxide-forming]"/>
    <property type="match status" value="1"/>
</dbReference>
<dbReference type="FunFam" id="3.50.50.60:FF:000409">
    <property type="entry name" value="Dimethylaniline monooxygenase [N-oxide-forming]"/>
    <property type="match status" value="1"/>
</dbReference>
<dbReference type="Gene3D" id="3.50.50.60">
    <property type="entry name" value="FAD/NAD(P)-binding domain"/>
    <property type="match status" value="2"/>
</dbReference>
<dbReference type="InterPro" id="IPR036188">
    <property type="entry name" value="FAD/NAD-bd_sf"/>
</dbReference>
<dbReference type="InterPro" id="IPR000960">
    <property type="entry name" value="Flavin_mOase"/>
</dbReference>
<dbReference type="InterPro" id="IPR020946">
    <property type="entry name" value="Flavin_mOase-like"/>
</dbReference>
<dbReference type="InterPro" id="IPR002257">
    <property type="entry name" value="Flavin_mOase_5"/>
</dbReference>
<dbReference type="InterPro" id="IPR050346">
    <property type="entry name" value="FMO-like"/>
</dbReference>
<dbReference type="PANTHER" id="PTHR23023">
    <property type="entry name" value="DIMETHYLANILINE MONOOXYGENASE"/>
    <property type="match status" value="1"/>
</dbReference>
<dbReference type="Pfam" id="PF00743">
    <property type="entry name" value="FMO-like"/>
    <property type="match status" value="1"/>
</dbReference>
<dbReference type="PIRSF" id="PIRSF000332">
    <property type="entry name" value="FMO"/>
    <property type="match status" value="1"/>
</dbReference>
<dbReference type="PRINTS" id="PR00370">
    <property type="entry name" value="FMOXYGENASE"/>
</dbReference>
<dbReference type="PRINTS" id="PR01125">
    <property type="entry name" value="FMOXYGENASE5"/>
</dbReference>
<dbReference type="SUPFAM" id="SSF51905">
    <property type="entry name" value="FAD/NAD(P)-binding domain"/>
    <property type="match status" value="2"/>
</dbReference>
<keyword id="KW-0256">Endoplasmic reticulum</keyword>
<keyword id="KW-0274">FAD</keyword>
<keyword id="KW-0285">Flavoprotein</keyword>
<keyword id="KW-0443">Lipid metabolism</keyword>
<keyword id="KW-0472">Membrane</keyword>
<keyword id="KW-0488">Methylation</keyword>
<keyword id="KW-0492">Microsome</keyword>
<keyword id="KW-0503">Monooxygenase</keyword>
<keyword id="KW-0521">NADP</keyword>
<keyword id="KW-0560">Oxidoreductase</keyword>
<keyword id="KW-0597">Phosphoprotein</keyword>
<keyword id="KW-1185">Reference proteome</keyword>
<keyword id="KW-0812">Transmembrane</keyword>
<keyword id="KW-1133">Transmembrane helix</keyword>
<proteinExistence type="evidence at protein level"/>
<feature type="chain" id="PRO_0000147666" description="Flavin-containing monooxygenase 5">
    <location>
        <begin position="1"/>
        <end position="533"/>
    </location>
</feature>
<feature type="transmembrane region" description="Helical" evidence="4">
    <location>
        <begin position="513"/>
        <end position="533"/>
    </location>
</feature>
<feature type="binding site" evidence="3">
    <location>
        <begin position="10"/>
        <end position="14"/>
    </location>
    <ligand>
        <name>FAD</name>
        <dbReference type="ChEBI" id="CHEBI:57692"/>
    </ligand>
</feature>
<feature type="binding site" evidence="3">
    <location>
        <position position="33"/>
    </location>
    <ligand>
        <name>FAD</name>
        <dbReference type="ChEBI" id="CHEBI:57692"/>
    </ligand>
</feature>
<feature type="binding site" evidence="3">
    <location>
        <begin position="41"/>
        <end position="42"/>
    </location>
    <ligand>
        <name>FAD</name>
        <dbReference type="ChEBI" id="CHEBI:57692"/>
    </ligand>
</feature>
<feature type="binding site" evidence="3">
    <location>
        <begin position="62"/>
        <end position="63"/>
    </location>
    <ligand>
        <name>FAD</name>
        <dbReference type="ChEBI" id="CHEBI:57692"/>
    </ligand>
</feature>
<feature type="binding site" evidence="3">
    <location>
        <begin position="196"/>
        <end position="199"/>
    </location>
    <ligand>
        <name>NADP(+)</name>
        <dbReference type="ChEBI" id="CHEBI:58349"/>
    </ligand>
</feature>
<feature type="modified residue" description="Dimethylated arginine" evidence="2">
    <location>
        <position position="5"/>
    </location>
</feature>
<feature type="modified residue" description="Phosphoserine" evidence="1">
    <location>
        <position position="54"/>
    </location>
</feature>
<feature type="modified residue" description="Phosphotyrosine" evidence="1">
    <location>
        <position position="56"/>
    </location>
</feature>
<feature type="modified residue" description="Phosphoserine" evidence="1">
    <location>
        <position position="58"/>
    </location>
</feature>
<feature type="modified residue" description="Phosphoserine" evidence="1">
    <location>
        <position position="280"/>
    </location>
</feature>
<feature type="modified residue" description="Phosphothreonine" evidence="1">
    <location>
        <position position="284"/>
    </location>
</feature>
<feature type="modified residue" description="Phosphoserine" evidence="11">
    <location>
        <position position="401"/>
    </location>
</feature>
<feature type="sequence conflict" description="In Ref. 1; AAB50013." evidence="8" ref="1">
    <original>V</original>
    <variation>I</variation>
    <location>
        <position position="313"/>
    </location>
</feature>
<feature type="sequence conflict" description="In Ref. 1; AAB50013." evidence="8" ref="1">
    <original>L</original>
    <variation>Q</variation>
    <location>
        <position position="450"/>
    </location>
</feature>
<gene>
    <name evidence="10" type="primary">Fmo5</name>
</gene>
<organism>
    <name type="scientific">Mus musculus</name>
    <name type="common">Mouse</name>
    <dbReference type="NCBI Taxonomy" id="10090"/>
    <lineage>
        <taxon>Eukaryota</taxon>
        <taxon>Metazoa</taxon>
        <taxon>Chordata</taxon>
        <taxon>Craniata</taxon>
        <taxon>Vertebrata</taxon>
        <taxon>Euteleostomi</taxon>
        <taxon>Mammalia</taxon>
        <taxon>Eutheria</taxon>
        <taxon>Euarchontoglires</taxon>
        <taxon>Glires</taxon>
        <taxon>Rodentia</taxon>
        <taxon>Myomorpha</taxon>
        <taxon>Muroidea</taxon>
        <taxon>Muridae</taxon>
        <taxon>Murinae</taxon>
        <taxon>Mus</taxon>
        <taxon>Mus</taxon>
    </lineage>
</organism>
<evidence type="ECO:0000250" key="1">
    <source>
        <dbReference type="UniProtKB" id="P49326"/>
    </source>
</evidence>
<evidence type="ECO:0000250" key="2">
    <source>
        <dbReference type="UniProtKB" id="Q8K4C0"/>
    </source>
</evidence>
<evidence type="ECO:0000250" key="3">
    <source>
        <dbReference type="UniProtKB" id="Q9HFE4"/>
    </source>
</evidence>
<evidence type="ECO:0000255" key="4"/>
<evidence type="ECO:0000269" key="5">
    <source>
    </source>
</evidence>
<evidence type="ECO:0000269" key="6">
    <source>
    </source>
</evidence>
<evidence type="ECO:0000269" key="7">
    <source>
    </source>
</evidence>
<evidence type="ECO:0000305" key="8"/>
<evidence type="ECO:0000305" key="9">
    <source>
    </source>
</evidence>
<evidence type="ECO:0000312" key="10">
    <source>
        <dbReference type="MGI" id="MGI:1310004"/>
    </source>
</evidence>
<evidence type="ECO:0007744" key="11">
    <source>
    </source>
</evidence>
<comment type="function">
    <text evidence="1 5 6">Acts as a Baeyer-Villiger monooxygenase on a broad range of substrates. Catalyzes the insertion of an oxygen atom into a carbon-carbon bond adjacent to a carbonyl, which converts ketones to esters. Active on diverse carbonyl compounds, whereas soft nucleophiles are mostly non- or poorly reactive. In contrast with other forms of FMO it is non- or poorly active on 'classical' substrates such as drugs, pesticides, and dietary components containing soft nucleophilic heteroatoms. Able to oxidize drug molecules bearing a carbonyl group on an aliphatic chain, such as nabumetone and pentoxifylline. Also, in the absence of substrates, shows slow but yet significant NADPH oxidase activity (By similarity). Acts as a positive modulator of cholesterol biosynthesis as well as glucose homeostasis, promoting metabolic aging via pleiotropic effects (PubMed:26049045, PubMed:28646079).</text>
</comment>
<comment type="catalytic activity">
    <reaction evidence="1">
        <text>N,N-dimethylaniline + NADPH + O2 + H(+) = N,N-dimethylaniline N-oxide + NADP(+) + H2O</text>
        <dbReference type="Rhea" id="RHEA:24468"/>
        <dbReference type="ChEBI" id="CHEBI:15377"/>
        <dbReference type="ChEBI" id="CHEBI:15378"/>
        <dbReference type="ChEBI" id="CHEBI:15379"/>
        <dbReference type="ChEBI" id="CHEBI:16269"/>
        <dbReference type="ChEBI" id="CHEBI:17735"/>
        <dbReference type="ChEBI" id="CHEBI:57783"/>
        <dbReference type="ChEBI" id="CHEBI:58349"/>
        <dbReference type="EC" id="1.14.13.8"/>
    </reaction>
    <physiologicalReaction direction="left-to-right" evidence="1">
        <dbReference type="Rhea" id="RHEA:24469"/>
    </physiologicalReaction>
</comment>
<comment type="catalytic activity">
    <reaction evidence="1">
        <text>NADPH + O2 + H(+) = H2O2 + NADP(+)</text>
        <dbReference type="Rhea" id="RHEA:11260"/>
        <dbReference type="ChEBI" id="CHEBI:15378"/>
        <dbReference type="ChEBI" id="CHEBI:15379"/>
        <dbReference type="ChEBI" id="CHEBI:16240"/>
        <dbReference type="ChEBI" id="CHEBI:57783"/>
        <dbReference type="ChEBI" id="CHEBI:58349"/>
        <dbReference type="EC" id="1.6.3.1"/>
    </reaction>
    <physiologicalReaction direction="left-to-right" evidence="1">
        <dbReference type="Rhea" id="RHEA:11261"/>
    </physiologicalReaction>
</comment>
<comment type="catalytic activity">
    <reaction evidence="1">
        <text>heptan-2-one + NADPH + O2 + H(+) = pentyl acetate + NADP(+) + H2O</text>
        <dbReference type="Rhea" id="RHEA:54836"/>
        <dbReference type="ChEBI" id="CHEBI:5672"/>
        <dbReference type="ChEBI" id="CHEBI:15377"/>
        <dbReference type="ChEBI" id="CHEBI:15378"/>
        <dbReference type="ChEBI" id="CHEBI:15379"/>
        <dbReference type="ChEBI" id="CHEBI:57783"/>
        <dbReference type="ChEBI" id="CHEBI:58349"/>
        <dbReference type="ChEBI" id="CHEBI:87362"/>
    </reaction>
    <physiologicalReaction direction="left-to-right" evidence="1">
        <dbReference type="Rhea" id="RHEA:54837"/>
    </physiologicalReaction>
</comment>
<comment type="catalytic activity">
    <reaction evidence="1">
        <text>octan-3-one + NADPH + O2 + H(+) = pentyl propanoate + NADP(+) + H2O</text>
        <dbReference type="Rhea" id="RHEA:54840"/>
        <dbReference type="ChEBI" id="CHEBI:15377"/>
        <dbReference type="ChEBI" id="CHEBI:15378"/>
        <dbReference type="ChEBI" id="CHEBI:15379"/>
        <dbReference type="ChEBI" id="CHEBI:57783"/>
        <dbReference type="ChEBI" id="CHEBI:58349"/>
        <dbReference type="ChEBI" id="CHEBI:80946"/>
        <dbReference type="ChEBI" id="CHEBI:87373"/>
    </reaction>
    <physiologicalReaction direction="left-to-right" evidence="1">
        <dbReference type="Rhea" id="RHEA:54841"/>
    </physiologicalReaction>
</comment>
<comment type="catalytic activity">
    <reaction evidence="1">
        <text>octan-3-one + NADPH + O2 + H(+) = ethyl hexanoate + NADP(+) + H2O</text>
        <dbReference type="Rhea" id="RHEA:54856"/>
        <dbReference type="ChEBI" id="CHEBI:15377"/>
        <dbReference type="ChEBI" id="CHEBI:15378"/>
        <dbReference type="ChEBI" id="CHEBI:15379"/>
        <dbReference type="ChEBI" id="CHEBI:57783"/>
        <dbReference type="ChEBI" id="CHEBI:58349"/>
        <dbReference type="ChEBI" id="CHEBI:80946"/>
        <dbReference type="ChEBI" id="CHEBI:86055"/>
    </reaction>
    <physiologicalReaction direction="left-to-right" evidence="1">
        <dbReference type="Rhea" id="RHEA:54857"/>
    </physiologicalReaction>
</comment>
<comment type="catalytic activity">
    <reaction evidence="1">
        <text>hexan-3-one + NADPH + O2 + H(+) = ethyl butanoate + NADP(+) + H2O</text>
        <dbReference type="Rhea" id="RHEA:54844"/>
        <dbReference type="ChEBI" id="CHEBI:15377"/>
        <dbReference type="ChEBI" id="CHEBI:15378"/>
        <dbReference type="ChEBI" id="CHEBI:15379"/>
        <dbReference type="ChEBI" id="CHEBI:57783"/>
        <dbReference type="ChEBI" id="CHEBI:58349"/>
        <dbReference type="ChEBI" id="CHEBI:88764"/>
        <dbReference type="ChEBI" id="CHEBI:89891"/>
    </reaction>
    <physiologicalReaction direction="left-to-right" evidence="1">
        <dbReference type="Rhea" id="RHEA:54845"/>
    </physiologicalReaction>
</comment>
<comment type="catalytic activity">
    <reaction evidence="1">
        <text>hexan-3-one + NADPH + O2 + H(+) = propyl propanoate + NADP(+) + H2O</text>
        <dbReference type="Rhea" id="RHEA:54848"/>
        <dbReference type="ChEBI" id="CHEBI:15377"/>
        <dbReference type="ChEBI" id="CHEBI:15378"/>
        <dbReference type="ChEBI" id="CHEBI:15379"/>
        <dbReference type="ChEBI" id="CHEBI:57783"/>
        <dbReference type="ChEBI" id="CHEBI:58349"/>
        <dbReference type="ChEBI" id="CHEBI:89828"/>
        <dbReference type="ChEBI" id="CHEBI:89891"/>
    </reaction>
    <physiologicalReaction direction="left-to-right" evidence="1">
        <dbReference type="Rhea" id="RHEA:54849"/>
    </physiologicalReaction>
</comment>
<comment type="catalytic activity">
    <reaction evidence="1">
        <text>heptan-4-one + NADPH + O2 + H(+) = propyl butanoate + NADP(+) + H2O</text>
        <dbReference type="Rhea" id="RHEA:54852"/>
        <dbReference type="ChEBI" id="CHEBI:15377"/>
        <dbReference type="ChEBI" id="CHEBI:15378"/>
        <dbReference type="ChEBI" id="CHEBI:15379"/>
        <dbReference type="ChEBI" id="CHEBI:57783"/>
        <dbReference type="ChEBI" id="CHEBI:58349"/>
        <dbReference type="ChEBI" id="CHEBI:89484"/>
        <dbReference type="ChEBI" id="CHEBI:89719"/>
    </reaction>
    <physiologicalReaction direction="left-to-right" evidence="1">
        <dbReference type="Rhea" id="RHEA:54853"/>
    </physiologicalReaction>
</comment>
<comment type="catalytic activity">
    <reaction evidence="1">
        <text>(2E)-geranial + NADPH + O2 + H(+) = (1E)-2,6-dimethylhepta-1,5-dien-1-yl formate + NADP(+) + H2O</text>
        <dbReference type="Rhea" id="RHEA:54860"/>
        <dbReference type="ChEBI" id="CHEBI:15377"/>
        <dbReference type="ChEBI" id="CHEBI:15378"/>
        <dbReference type="ChEBI" id="CHEBI:15379"/>
        <dbReference type="ChEBI" id="CHEBI:16980"/>
        <dbReference type="ChEBI" id="CHEBI:57783"/>
        <dbReference type="ChEBI" id="CHEBI:58349"/>
        <dbReference type="ChEBI" id="CHEBI:138375"/>
    </reaction>
    <physiologicalReaction direction="left-to-right" evidence="1">
        <dbReference type="Rhea" id="RHEA:54861"/>
    </physiologicalReaction>
</comment>
<comment type="catalytic activity">
    <reaction evidence="1">
        <text>sulcatone + NADPH + O2 + H(+) = 4-methylpent-3-en-1-yl acetate + NADP(+) + H2O</text>
        <dbReference type="Rhea" id="RHEA:54864"/>
        <dbReference type="ChEBI" id="CHEBI:15377"/>
        <dbReference type="ChEBI" id="CHEBI:15378"/>
        <dbReference type="ChEBI" id="CHEBI:15379"/>
        <dbReference type="ChEBI" id="CHEBI:16310"/>
        <dbReference type="ChEBI" id="CHEBI:57783"/>
        <dbReference type="ChEBI" id="CHEBI:58349"/>
        <dbReference type="ChEBI" id="CHEBI:138373"/>
    </reaction>
    <physiologicalReaction direction="left-to-right" evidence="1">
        <dbReference type="Rhea" id="RHEA:54865"/>
    </physiologicalReaction>
</comment>
<comment type="cofactor">
    <cofactor evidence="9">
        <name>FAD</name>
        <dbReference type="ChEBI" id="CHEBI:57692"/>
    </cofactor>
</comment>
<comment type="subcellular location">
    <subcellularLocation>
        <location evidence="1">Microsome membrane</location>
    </subcellularLocation>
    <subcellularLocation>
        <location evidence="1">Endoplasmic reticulum membrane</location>
    </subcellularLocation>
</comment>
<comment type="tissue specificity">
    <text evidence="5 6">Expressed in liver (at protein level) (PubMed:26049045). Expressed in the mucosal epithelium of the gastrointestinal tract (PubMed:28646079).</text>
</comment>
<comment type="induction">
    <text evidence="6">In the gastrointestinal tract, expression is induced in response to a high-fat diet.</text>
</comment>
<comment type="disruption phenotype">
    <text evidence="5 6 7">Mutants exhibit a lean phenotype, which is age-related, becoming apparent after 20 weeks of age. Despite greater food intake, they weigh less, store less fat in white adipose tissue (WAT), have lower plasma glucose and cholesterol concentrations and enhanced whole-body energy expenditure, due mostly to increased resting energy expenditure, with no increase in physical activity. They show a a higher rate of fatty acid oxidation in WAT (PubMed:26049045, PubMed:29686991). When fed a high-fat diet, they are protected against weight gain and reduction of insulin sensitivity (PubMed:28646079).</text>
</comment>
<comment type="similarity">
    <text evidence="8">Belongs to the FMO family.</text>
</comment>
<accession>P97872</accession>
<accession>Q8R1W6</accession>
<name>FMO5_MOUSE</name>
<sequence length="533" mass="60001">MAKKRIAVIGAGASGLTCIKCCLEEGLEPVCFERSGDIGGLWRFQEAPEEGRASIYQSVVINTSKEMMCFSDYPIPDHYPNYMHNSQVLEYFRMYAKEFDLLKYIQFKTTVCSVKKQPDFSTSGQWQVVTECEGKQQVDVFDGVLVCTGHHTDAHLPLESFPGIEKFKGKYFHSRDYKNPVEFTGKRVIVIGIGNSGGDLAVEISHTAKQVFLSTRRGAWILNRVGKHGYPIDLLLSSRIMYYLSRICGPSLKNNYMEKQMNQRFDHEMFGLKPKHRALSQHPTVNDDLPNRIIAGLVKVKGNVKEFTETAAVFEDGSREDGIDVVIFATGYSFAFPFLEDSVKVVKNKVSLYKKVFPPNLEKPTLAIIGLIQPLGAIMPISELQGRWATQVFKGLKKLPSQSEMMAEINKAREEMAKRYVDSQRHTIQGDYIDTMEEIADLVGVRPNILPLVFTDPRLALRLLLGPCTPVQYRLQGPGKWAGARKTILTTEDRVRKPLMTRVVERDSSGGSLVTVRVLMLAVAFFAVILAYF</sequence>